<reference key="1">
    <citation type="journal article" date="2007" name="Environ. Microbiol.">
        <title>Whole-genome analysis of the ammonia-oxidizing bacterium, Nitrosomonas eutropha C91: implications for niche adaptation.</title>
        <authorList>
            <person name="Stein L.Y."/>
            <person name="Arp D.J."/>
            <person name="Berube P.M."/>
            <person name="Chain P.S."/>
            <person name="Hauser L."/>
            <person name="Jetten M.S."/>
            <person name="Klotz M.G."/>
            <person name="Larimer F.W."/>
            <person name="Norton J.M."/>
            <person name="Op den Camp H.J.M."/>
            <person name="Shin M."/>
            <person name="Wei X."/>
        </authorList>
    </citation>
    <scope>NUCLEOTIDE SEQUENCE [LARGE SCALE GENOMIC DNA]</scope>
    <source>
        <strain>DSM 101675 / C91 / Nm57</strain>
    </source>
</reference>
<keyword id="KW-0030">Aminoacyl-tRNA synthetase</keyword>
<keyword id="KW-0067">ATP-binding</keyword>
<keyword id="KW-0963">Cytoplasm</keyword>
<keyword id="KW-0436">Ligase</keyword>
<keyword id="KW-0479">Metal-binding</keyword>
<keyword id="KW-0547">Nucleotide-binding</keyword>
<keyword id="KW-0648">Protein biosynthesis</keyword>
<keyword id="KW-0694">RNA-binding</keyword>
<keyword id="KW-0820">tRNA-binding</keyword>
<keyword id="KW-0862">Zinc</keyword>
<organism>
    <name type="scientific">Nitrosomonas eutropha (strain DSM 101675 / C91 / Nm57)</name>
    <dbReference type="NCBI Taxonomy" id="335283"/>
    <lineage>
        <taxon>Bacteria</taxon>
        <taxon>Pseudomonadati</taxon>
        <taxon>Pseudomonadota</taxon>
        <taxon>Betaproteobacteria</taxon>
        <taxon>Nitrosomonadales</taxon>
        <taxon>Nitrosomonadaceae</taxon>
        <taxon>Nitrosomonas</taxon>
    </lineage>
</organism>
<evidence type="ECO:0000255" key="1">
    <source>
        <dbReference type="HAMAP-Rule" id="MF_00036"/>
    </source>
</evidence>
<protein>
    <recommendedName>
        <fullName evidence="1">Alanine--tRNA ligase</fullName>
        <ecNumber evidence="1">6.1.1.7</ecNumber>
    </recommendedName>
    <alternativeName>
        <fullName evidence="1">Alanyl-tRNA synthetase</fullName>
        <shortName evidence="1">AlaRS</shortName>
    </alternativeName>
</protein>
<name>SYA_NITEC</name>
<proteinExistence type="inferred from homology"/>
<comment type="function">
    <text evidence="1">Catalyzes the attachment of alanine to tRNA(Ala) in a two-step reaction: alanine is first activated by ATP to form Ala-AMP and then transferred to the acceptor end of tRNA(Ala). Also edits incorrectly charged Ser-tRNA(Ala) and Gly-tRNA(Ala) via its editing domain.</text>
</comment>
<comment type="catalytic activity">
    <reaction evidence="1">
        <text>tRNA(Ala) + L-alanine + ATP = L-alanyl-tRNA(Ala) + AMP + diphosphate</text>
        <dbReference type="Rhea" id="RHEA:12540"/>
        <dbReference type="Rhea" id="RHEA-COMP:9657"/>
        <dbReference type="Rhea" id="RHEA-COMP:9923"/>
        <dbReference type="ChEBI" id="CHEBI:30616"/>
        <dbReference type="ChEBI" id="CHEBI:33019"/>
        <dbReference type="ChEBI" id="CHEBI:57972"/>
        <dbReference type="ChEBI" id="CHEBI:78442"/>
        <dbReference type="ChEBI" id="CHEBI:78497"/>
        <dbReference type="ChEBI" id="CHEBI:456215"/>
        <dbReference type="EC" id="6.1.1.7"/>
    </reaction>
</comment>
<comment type="cofactor">
    <cofactor evidence="1">
        <name>Zn(2+)</name>
        <dbReference type="ChEBI" id="CHEBI:29105"/>
    </cofactor>
    <text evidence="1">Binds 1 zinc ion per subunit.</text>
</comment>
<comment type="subcellular location">
    <subcellularLocation>
        <location evidence="1">Cytoplasm</location>
    </subcellularLocation>
</comment>
<comment type="domain">
    <text evidence="1">Consists of three domains; the N-terminal catalytic domain, the editing domain and the C-terminal C-Ala domain. The editing domain removes incorrectly charged amino acids, while the C-Ala domain, along with tRNA(Ala), serves as a bridge to cooperatively bring together the editing and aminoacylation centers thus stimulating deacylation of misacylated tRNAs.</text>
</comment>
<comment type="similarity">
    <text evidence="1">Belongs to the class-II aminoacyl-tRNA synthetase family.</text>
</comment>
<feature type="chain" id="PRO_0000347701" description="Alanine--tRNA ligase">
    <location>
        <begin position="1"/>
        <end position="863"/>
    </location>
</feature>
<feature type="binding site" evidence="1">
    <location>
        <position position="552"/>
    </location>
    <ligand>
        <name>Zn(2+)</name>
        <dbReference type="ChEBI" id="CHEBI:29105"/>
    </ligand>
</feature>
<feature type="binding site" evidence="1">
    <location>
        <position position="556"/>
    </location>
    <ligand>
        <name>Zn(2+)</name>
        <dbReference type="ChEBI" id="CHEBI:29105"/>
    </ligand>
</feature>
<feature type="binding site" evidence="1">
    <location>
        <position position="654"/>
    </location>
    <ligand>
        <name>Zn(2+)</name>
        <dbReference type="ChEBI" id="CHEBI:29105"/>
    </ligand>
</feature>
<feature type="binding site" evidence="1">
    <location>
        <position position="658"/>
    </location>
    <ligand>
        <name>Zn(2+)</name>
        <dbReference type="ChEBI" id="CHEBI:29105"/>
    </ligand>
</feature>
<sequence length="863" mass="94829">MKSSEIRQKFLDFFETHGHVVVPSSPLVPGNDPTLLFTNAGMVQFKDVFLGQDKRPYVRAVSAQRCVRAGGKHNDLENVGYTARHHTFFEMLGNFSFGDYFKRNAILFAWEFLTGPLNIPKDKLWATVYAEDDEAADIWLNEVKIAPSRLVRIATSDNFWQMGETGPCGPCSEIFYDHGPEVAGGPPGSEDADGDRYVEIWNLVFMQYNRDTSGELHPLPKPSVDTGMGLERIAAVMQQVHSNYEIDLFRCLIEAAARVTGEQDLSNNSLKVIADHIRACAFLITDGVIPGNEGRGYVLRRILRRAIRHGYRLGQKQSFFHLLVDDLVDVMGQAYPELMAAKKHVIAVIRQEEERFAETLENGMGVLEAALARESNMLPGDVVFRLYDTFGFPVDLTADIARERGGGIDLAGFEMCMAQQRDRARASGKFTMQAGLEYVGLPTEFHGYETLQHEAHILVLYKEGSHVDFIEAGDEAVVVLDQTPFYAESGGQAGDSGELLSGSGTFTVKDTQKIQAKVFGHAGMLSSGRLVTGDRVIARVNPIARINTAYNHSATHLLHAALRQILGNHVTQKGSLVDADRLRFDFSHNSAMQANEIRQVENLVNAQIRKNHEVATQLMAYDEAVKQGAMALFGEKYSDTVRVVSMGDFSTELCGGTHVQHSGDIGFFRIVAESGVAAGIRRIEALTGEAALAYTQQQEQQLQQVSDVLKAAPHEAALKLSQVLDHVRQVEKEITVLRSKLAGMQSSSLIEQAQEIKGIRVLAAALENVNVRTLRETLDNFKSRLKSCVVVLGTIEDDKVMLIAGVTNDLTAKLKAGDLINFVAQQVGGKGGGRADMAQAGGTLPDKLPQALTSVAGWVERNL</sequence>
<accession>Q0AHX2</accession>
<dbReference type="EC" id="6.1.1.7" evidence="1"/>
<dbReference type="EMBL" id="CP000450">
    <property type="protein sequence ID" value="ABI59060.1"/>
    <property type="molecule type" value="Genomic_DNA"/>
</dbReference>
<dbReference type="RefSeq" id="WP_011633885.1">
    <property type="nucleotide sequence ID" value="NC_008344.1"/>
</dbReference>
<dbReference type="SMR" id="Q0AHX2"/>
<dbReference type="STRING" id="335283.Neut_0791"/>
<dbReference type="KEGG" id="net:Neut_0791"/>
<dbReference type="eggNOG" id="COG0013">
    <property type="taxonomic scope" value="Bacteria"/>
</dbReference>
<dbReference type="HOGENOM" id="CLU_004485_1_1_4"/>
<dbReference type="OrthoDB" id="9803884at2"/>
<dbReference type="Proteomes" id="UP000001966">
    <property type="component" value="Chromosome"/>
</dbReference>
<dbReference type="GO" id="GO:0005829">
    <property type="term" value="C:cytosol"/>
    <property type="evidence" value="ECO:0007669"/>
    <property type="project" value="TreeGrafter"/>
</dbReference>
<dbReference type="GO" id="GO:0004813">
    <property type="term" value="F:alanine-tRNA ligase activity"/>
    <property type="evidence" value="ECO:0007669"/>
    <property type="project" value="UniProtKB-UniRule"/>
</dbReference>
<dbReference type="GO" id="GO:0002161">
    <property type="term" value="F:aminoacyl-tRNA deacylase activity"/>
    <property type="evidence" value="ECO:0007669"/>
    <property type="project" value="TreeGrafter"/>
</dbReference>
<dbReference type="GO" id="GO:0005524">
    <property type="term" value="F:ATP binding"/>
    <property type="evidence" value="ECO:0007669"/>
    <property type="project" value="UniProtKB-UniRule"/>
</dbReference>
<dbReference type="GO" id="GO:0000049">
    <property type="term" value="F:tRNA binding"/>
    <property type="evidence" value="ECO:0007669"/>
    <property type="project" value="UniProtKB-KW"/>
</dbReference>
<dbReference type="GO" id="GO:0008270">
    <property type="term" value="F:zinc ion binding"/>
    <property type="evidence" value="ECO:0007669"/>
    <property type="project" value="UniProtKB-UniRule"/>
</dbReference>
<dbReference type="GO" id="GO:0006419">
    <property type="term" value="P:alanyl-tRNA aminoacylation"/>
    <property type="evidence" value="ECO:0007669"/>
    <property type="project" value="UniProtKB-UniRule"/>
</dbReference>
<dbReference type="GO" id="GO:0045892">
    <property type="term" value="P:negative regulation of DNA-templated transcription"/>
    <property type="evidence" value="ECO:0007669"/>
    <property type="project" value="TreeGrafter"/>
</dbReference>
<dbReference type="CDD" id="cd00673">
    <property type="entry name" value="AlaRS_core"/>
    <property type="match status" value="1"/>
</dbReference>
<dbReference type="FunFam" id="2.40.30.130:FF:000001">
    <property type="entry name" value="Alanine--tRNA ligase"/>
    <property type="match status" value="1"/>
</dbReference>
<dbReference type="FunFam" id="3.10.310.40:FF:000001">
    <property type="entry name" value="Alanine--tRNA ligase"/>
    <property type="match status" value="1"/>
</dbReference>
<dbReference type="FunFam" id="3.30.54.20:FF:000001">
    <property type="entry name" value="Alanine--tRNA ligase"/>
    <property type="match status" value="1"/>
</dbReference>
<dbReference type="FunFam" id="3.30.930.10:FF:000004">
    <property type="entry name" value="Alanine--tRNA ligase"/>
    <property type="match status" value="1"/>
</dbReference>
<dbReference type="FunFam" id="3.30.980.10:FF:000004">
    <property type="entry name" value="Alanine--tRNA ligase, cytoplasmic"/>
    <property type="match status" value="1"/>
</dbReference>
<dbReference type="Gene3D" id="2.40.30.130">
    <property type="match status" value="1"/>
</dbReference>
<dbReference type="Gene3D" id="3.10.310.40">
    <property type="match status" value="1"/>
</dbReference>
<dbReference type="Gene3D" id="3.30.54.20">
    <property type="match status" value="1"/>
</dbReference>
<dbReference type="Gene3D" id="6.10.250.550">
    <property type="match status" value="1"/>
</dbReference>
<dbReference type="Gene3D" id="3.30.930.10">
    <property type="entry name" value="Bira Bifunctional Protein, Domain 2"/>
    <property type="match status" value="1"/>
</dbReference>
<dbReference type="Gene3D" id="3.30.980.10">
    <property type="entry name" value="Threonyl-trna Synthetase, Chain A, domain 2"/>
    <property type="match status" value="1"/>
</dbReference>
<dbReference type="HAMAP" id="MF_00036_B">
    <property type="entry name" value="Ala_tRNA_synth_B"/>
    <property type="match status" value="1"/>
</dbReference>
<dbReference type="InterPro" id="IPR045864">
    <property type="entry name" value="aa-tRNA-synth_II/BPL/LPL"/>
</dbReference>
<dbReference type="InterPro" id="IPR002318">
    <property type="entry name" value="Ala-tRNA-lgiase_IIc"/>
</dbReference>
<dbReference type="InterPro" id="IPR018162">
    <property type="entry name" value="Ala-tRNA-ligase_IIc_anticod-bd"/>
</dbReference>
<dbReference type="InterPro" id="IPR018165">
    <property type="entry name" value="Ala-tRNA-synth_IIc_core"/>
</dbReference>
<dbReference type="InterPro" id="IPR018164">
    <property type="entry name" value="Ala-tRNA-synth_IIc_N"/>
</dbReference>
<dbReference type="InterPro" id="IPR050058">
    <property type="entry name" value="Ala-tRNA_ligase"/>
</dbReference>
<dbReference type="InterPro" id="IPR023033">
    <property type="entry name" value="Ala_tRNA_ligase_euk/bac"/>
</dbReference>
<dbReference type="InterPro" id="IPR003156">
    <property type="entry name" value="DHHA1_dom"/>
</dbReference>
<dbReference type="InterPro" id="IPR018163">
    <property type="entry name" value="Thr/Ala-tRNA-synth_IIc_edit"/>
</dbReference>
<dbReference type="InterPro" id="IPR009000">
    <property type="entry name" value="Transl_B-barrel_sf"/>
</dbReference>
<dbReference type="InterPro" id="IPR012947">
    <property type="entry name" value="tRNA_SAD"/>
</dbReference>
<dbReference type="NCBIfam" id="TIGR00344">
    <property type="entry name" value="alaS"/>
    <property type="match status" value="1"/>
</dbReference>
<dbReference type="PANTHER" id="PTHR11777:SF9">
    <property type="entry name" value="ALANINE--TRNA LIGASE, CYTOPLASMIC"/>
    <property type="match status" value="1"/>
</dbReference>
<dbReference type="PANTHER" id="PTHR11777">
    <property type="entry name" value="ALANYL-TRNA SYNTHETASE"/>
    <property type="match status" value="1"/>
</dbReference>
<dbReference type="Pfam" id="PF02272">
    <property type="entry name" value="DHHA1"/>
    <property type="match status" value="1"/>
</dbReference>
<dbReference type="Pfam" id="PF01411">
    <property type="entry name" value="tRNA-synt_2c"/>
    <property type="match status" value="1"/>
</dbReference>
<dbReference type="Pfam" id="PF07973">
    <property type="entry name" value="tRNA_SAD"/>
    <property type="match status" value="1"/>
</dbReference>
<dbReference type="PRINTS" id="PR00980">
    <property type="entry name" value="TRNASYNTHALA"/>
</dbReference>
<dbReference type="SMART" id="SM00863">
    <property type="entry name" value="tRNA_SAD"/>
    <property type="match status" value="1"/>
</dbReference>
<dbReference type="SUPFAM" id="SSF55681">
    <property type="entry name" value="Class II aaRS and biotin synthetases"/>
    <property type="match status" value="1"/>
</dbReference>
<dbReference type="SUPFAM" id="SSF101353">
    <property type="entry name" value="Putative anticodon-binding domain of alanyl-tRNA synthetase (AlaRS)"/>
    <property type="match status" value="1"/>
</dbReference>
<dbReference type="SUPFAM" id="SSF55186">
    <property type="entry name" value="ThrRS/AlaRS common domain"/>
    <property type="match status" value="1"/>
</dbReference>
<dbReference type="SUPFAM" id="SSF50447">
    <property type="entry name" value="Translation proteins"/>
    <property type="match status" value="1"/>
</dbReference>
<dbReference type="PROSITE" id="PS50860">
    <property type="entry name" value="AA_TRNA_LIGASE_II_ALA"/>
    <property type="match status" value="1"/>
</dbReference>
<gene>
    <name evidence="1" type="primary">alaS</name>
    <name type="ordered locus">Neut_0791</name>
</gene>